<accession>Q5R5E5</accession>
<keyword id="KW-0007">Acetylation</keyword>
<keyword id="KW-0030">Aminoacyl-tRNA synthetase</keyword>
<keyword id="KW-0067">ATP-binding</keyword>
<keyword id="KW-0436">Ligase</keyword>
<keyword id="KW-0496">Mitochondrion</keyword>
<keyword id="KW-0547">Nucleotide-binding</keyword>
<keyword id="KW-0597">Phosphoprotein</keyword>
<keyword id="KW-0648">Protein biosynthesis</keyword>
<keyword id="KW-1185">Reference proteome</keyword>
<keyword id="KW-0809">Transit peptide</keyword>
<evidence type="ECO:0000250" key="1">
    <source>
        <dbReference type="UniProtKB" id="P12081"/>
    </source>
</evidence>
<evidence type="ECO:0000250" key="2">
    <source>
        <dbReference type="UniProtKB" id="P49590"/>
    </source>
</evidence>
<evidence type="ECO:0000255" key="3"/>
<evidence type="ECO:0000305" key="4"/>
<gene>
    <name type="primary">HARS2</name>
    <name type="synonym">HARSL</name>
</gene>
<sequence>MHLLGLLPRRAWASLLSQLLRPPWASCTGAVRCQSQVAEAVLTSQLKAHQEKPNFIIKTPKGTRDLSPQHMVVREKILDLVISCFKRHGAKGMDTPAFELKETLTEKYGEDSGLMYDLKDQGGELLSLRYDLTVPFARYLAMNKVKKMKRYHVGKVWRRESPTIVQGRYREFCQCDFDIAGQFDPMIPDAECLKIMCEILSGLQLGDFLIKVNDRRIVDGMFAVCGVPESKFRAICSSIDKLDKMAWKDVRHEMVVKKGLAPEVADRIGDYVQCHGGVSLVEQMFQDPRLSQNKQALEGLGDLKLLFEYLTLFGIADKISFDLSLARGLDYYTGVIYEAVLLQTPTQAGEEPLNVGSVAAGGRYDGLVGMFDPKGHKVPCVGLSIGVERIFYIVEQRMKTKGEKVRTTETQVFVATPQKNFLQERLKLIAELWNSGIKAEMLYKNNPKLLTQLHYCESTGIPLVVIIGEQELKEGVIKIRSVASREEVAIKRENLVAEIQKRLSES</sequence>
<feature type="transit peptide" description="Mitochondrion" evidence="3">
    <location>
        <begin position="1"/>
        <end position="33"/>
    </location>
</feature>
<feature type="chain" id="PRO_0000254585" description="Histidine--tRNA ligase, mitochondrial">
    <location>
        <begin position="34"/>
        <end position="506"/>
    </location>
</feature>
<feature type="binding site" evidence="1">
    <location>
        <begin position="131"/>
        <end position="133"/>
    </location>
    <ligand>
        <name>L-histidine</name>
        <dbReference type="ChEBI" id="CHEBI:57595"/>
    </ligand>
</feature>
<feature type="binding site" evidence="1">
    <location>
        <position position="158"/>
    </location>
    <ligand>
        <name>L-histidine</name>
        <dbReference type="ChEBI" id="CHEBI:57595"/>
    </ligand>
</feature>
<feature type="binding site" evidence="1">
    <location>
        <position position="174"/>
    </location>
    <ligand>
        <name>L-histidine</name>
        <dbReference type="ChEBI" id="CHEBI:57595"/>
    </ligand>
</feature>
<feature type="binding site" evidence="1">
    <location>
        <position position="178"/>
    </location>
    <ligand>
        <name>L-histidine</name>
        <dbReference type="ChEBI" id="CHEBI:57595"/>
    </ligand>
</feature>
<feature type="binding site" evidence="1">
    <location>
        <position position="327"/>
    </location>
    <ligand>
        <name>L-histidine</name>
        <dbReference type="ChEBI" id="CHEBI:57595"/>
    </ligand>
</feature>
<feature type="binding site" evidence="1">
    <location>
        <begin position="331"/>
        <end position="332"/>
    </location>
    <ligand>
        <name>L-histidine</name>
        <dbReference type="ChEBI" id="CHEBI:57595"/>
    </ligand>
</feature>
<feature type="modified residue" description="Phosphoserine" evidence="2">
    <location>
        <position position="67"/>
    </location>
</feature>
<feature type="modified residue" description="N6-acetyllysine" evidence="2">
    <location>
        <position position="444"/>
    </location>
</feature>
<reference key="1">
    <citation type="submission" date="2004-11" db="EMBL/GenBank/DDBJ databases">
        <authorList>
            <consortium name="The German cDNA consortium"/>
        </authorList>
    </citation>
    <scope>NUCLEOTIDE SEQUENCE [LARGE SCALE MRNA]</scope>
    <source>
        <tissue>Kidney</tissue>
    </source>
</reference>
<comment type="function">
    <text evidence="2">Mitochondrial aminoacyl-tRNA synthetase that catalyzes the ATP-dependent ligation of histidine to the 3'-end of its cognate tRNA, via the formation of an aminoacyl-adenylate intermediate (His-AMP).</text>
</comment>
<comment type="catalytic activity">
    <reaction evidence="2">
        <text>tRNA(His) + L-histidine + ATP = L-histidyl-tRNA(His) + AMP + diphosphate + H(+)</text>
        <dbReference type="Rhea" id="RHEA:17313"/>
        <dbReference type="Rhea" id="RHEA-COMP:9665"/>
        <dbReference type="Rhea" id="RHEA-COMP:9689"/>
        <dbReference type="ChEBI" id="CHEBI:15378"/>
        <dbReference type="ChEBI" id="CHEBI:30616"/>
        <dbReference type="ChEBI" id="CHEBI:33019"/>
        <dbReference type="ChEBI" id="CHEBI:57595"/>
        <dbReference type="ChEBI" id="CHEBI:78442"/>
        <dbReference type="ChEBI" id="CHEBI:78527"/>
        <dbReference type="ChEBI" id="CHEBI:456215"/>
        <dbReference type="EC" id="6.1.1.21"/>
    </reaction>
</comment>
<comment type="subunit">
    <text evidence="2">Homodimer.</text>
</comment>
<comment type="subcellular location">
    <subcellularLocation>
        <location evidence="2">Mitochondrion</location>
    </subcellularLocation>
</comment>
<comment type="similarity">
    <text evidence="4">Belongs to the class-II aminoacyl-tRNA synthetase family.</text>
</comment>
<name>SYHM_PONAB</name>
<dbReference type="EC" id="6.1.1.21" evidence="2"/>
<dbReference type="EMBL" id="CR860916">
    <property type="protein sequence ID" value="CAH93021.1"/>
    <property type="molecule type" value="mRNA"/>
</dbReference>
<dbReference type="RefSeq" id="NP_001126785.1">
    <property type="nucleotide sequence ID" value="NM_001133313.1"/>
</dbReference>
<dbReference type="SMR" id="Q5R5E5"/>
<dbReference type="FunCoup" id="Q5R5E5">
    <property type="interactions" value="4004"/>
</dbReference>
<dbReference type="STRING" id="9601.ENSPPYP00000017743"/>
<dbReference type="Ensembl" id="ENSPPYT00000018456.3">
    <property type="protein sequence ID" value="ENSPPYP00000017743.3"/>
    <property type="gene ID" value="ENSPPYG00000015865.3"/>
</dbReference>
<dbReference type="GeneID" id="100173789"/>
<dbReference type="KEGG" id="pon:100173789"/>
<dbReference type="CTD" id="23438"/>
<dbReference type="eggNOG" id="KOG1936">
    <property type="taxonomic scope" value="Eukaryota"/>
</dbReference>
<dbReference type="GeneTree" id="ENSGT00390000005922"/>
<dbReference type="InParanoid" id="Q5R5E5"/>
<dbReference type="OMA" id="YQIQKVW"/>
<dbReference type="OrthoDB" id="1906957at2759"/>
<dbReference type="Proteomes" id="UP000001595">
    <property type="component" value="Chromosome 5"/>
</dbReference>
<dbReference type="GO" id="GO:0005829">
    <property type="term" value="C:cytosol"/>
    <property type="evidence" value="ECO:0007669"/>
    <property type="project" value="TreeGrafter"/>
</dbReference>
<dbReference type="GO" id="GO:0005739">
    <property type="term" value="C:mitochondrion"/>
    <property type="evidence" value="ECO:0007669"/>
    <property type="project" value="UniProtKB-SubCell"/>
</dbReference>
<dbReference type="GO" id="GO:0005524">
    <property type="term" value="F:ATP binding"/>
    <property type="evidence" value="ECO:0007669"/>
    <property type="project" value="UniProtKB-KW"/>
</dbReference>
<dbReference type="GO" id="GO:0004821">
    <property type="term" value="F:histidine-tRNA ligase activity"/>
    <property type="evidence" value="ECO:0007669"/>
    <property type="project" value="UniProtKB-EC"/>
</dbReference>
<dbReference type="GO" id="GO:0042802">
    <property type="term" value="F:identical protein binding"/>
    <property type="evidence" value="ECO:0007669"/>
    <property type="project" value="Ensembl"/>
</dbReference>
<dbReference type="GO" id="GO:0003723">
    <property type="term" value="F:RNA binding"/>
    <property type="evidence" value="ECO:0007669"/>
    <property type="project" value="TreeGrafter"/>
</dbReference>
<dbReference type="GO" id="GO:0006427">
    <property type="term" value="P:histidyl-tRNA aminoacylation"/>
    <property type="evidence" value="ECO:0007669"/>
    <property type="project" value="Ensembl"/>
</dbReference>
<dbReference type="CDD" id="cd00773">
    <property type="entry name" value="HisRS-like_core"/>
    <property type="match status" value="1"/>
</dbReference>
<dbReference type="CDD" id="cd00859">
    <property type="entry name" value="HisRS_anticodon"/>
    <property type="match status" value="1"/>
</dbReference>
<dbReference type="FunFam" id="3.40.50.800:FF:000008">
    <property type="entry name" value="histidine--tRNA ligase, cytoplasmic isoform X1"/>
    <property type="match status" value="1"/>
</dbReference>
<dbReference type="FunFam" id="3.30.930.10:FF:000021">
    <property type="entry name" value="Probable histidine--tRNA ligase, mitochondrial"/>
    <property type="match status" value="1"/>
</dbReference>
<dbReference type="Gene3D" id="3.40.50.800">
    <property type="entry name" value="Anticodon-binding domain"/>
    <property type="match status" value="1"/>
</dbReference>
<dbReference type="Gene3D" id="3.30.930.10">
    <property type="entry name" value="Bira Bifunctional Protein, Domain 2"/>
    <property type="match status" value="1"/>
</dbReference>
<dbReference type="InterPro" id="IPR006195">
    <property type="entry name" value="aa-tRNA-synth_II"/>
</dbReference>
<dbReference type="InterPro" id="IPR045864">
    <property type="entry name" value="aa-tRNA-synth_II/BPL/LPL"/>
</dbReference>
<dbReference type="InterPro" id="IPR004154">
    <property type="entry name" value="Anticodon-bd"/>
</dbReference>
<dbReference type="InterPro" id="IPR036621">
    <property type="entry name" value="Anticodon-bd_dom_sf"/>
</dbReference>
<dbReference type="InterPro" id="IPR015807">
    <property type="entry name" value="His-tRNA-ligase"/>
</dbReference>
<dbReference type="InterPro" id="IPR041715">
    <property type="entry name" value="HisRS-like_core"/>
</dbReference>
<dbReference type="InterPro" id="IPR004516">
    <property type="entry name" value="HisRS/HisZ"/>
</dbReference>
<dbReference type="InterPro" id="IPR033656">
    <property type="entry name" value="HisRS_anticodon"/>
</dbReference>
<dbReference type="NCBIfam" id="TIGR00442">
    <property type="entry name" value="hisS"/>
    <property type="match status" value="1"/>
</dbReference>
<dbReference type="PANTHER" id="PTHR11476:SF6">
    <property type="entry name" value="HISTIDINE--TRNA LIGASE, MITOCHONDRIAL"/>
    <property type="match status" value="1"/>
</dbReference>
<dbReference type="PANTHER" id="PTHR11476">
    <property type="entry name" value="HISTIDYL-TRNA SYNTHETASE"/>
    <property type="match status" value="1"/>
</dbReference>
<dbReference type="Pfam" id="PF03129">
    <property type="entry name" value="HGTP_anticodon"/>
    <property type="match status" value="1"/>
</dbReference>
<dbReference type="Pfam" id="PF13393">
    <property type="entry name" value="tRNA-synt_His"/>
    <property type="match status" value="1"/>
</dbReference>
<dbReference type="PIRSF" id="PIRSF001549">
    <property type="entry name" value="His-tRNA_synth"/>
    <property type="match status" value="1"/>
</dbReference>
<dbReference type="SUPFAM" id="SSF52954">
    <property type="entry name" value="Class II aaRS ABD-related"/>
    <property type="match status" value="1"/>
</dbReference>
<dbReference type="SUPFAM" id="SSF55681">
    <property type="entry name" value="Class II aaRS and biotin synthetases"/>
    <property type="match status" value="1"/>
</dbReference>
<dbReference type="PROSITE" id="PS50862">
    <property type="entry name" value="AA_TRNA_LIGASE_II"/>
    <property type="match status" value="1"/>
</dbReference>
<protein>
    <recommendedName>
        <fullName>Histidine--tRNA ligase, mitochondrial</fullName>
        <ecNumber evidence="2">6.1.1.21</ecNumber>
    </recommendedName>
    <alternativeName>
        <fullName>Histidine--tRNA ligase-like</fullName>
    </alternativeName>
    <alternativeName>
        <fullName>Histidyl-tRNA synthetase</fullName>
        <shortName>HisRS</shortName>
    </alternativeName>
</protein>
<proteinExistence type="evidence at transcript level"/>
<organism>
    <name type="scientific">Pongo abelii</name>
    <name type="common">Sumatran orangutan</name>
    <name type="synonym">Pongo pygmaeus abelii</name>
    <dbReference type="NCBI Taxonomy" id="9601"/>
    <lineage>
        <taxon>Eukaryota</taxon>
        <taxon>Metazoa</taxon>
        <taxon>Chordata</taxon>
        <taxon>Craniata</taxon>
        <taxon>Vertebrata</taxon>
        <taxon>Euteleostomi</taxon>
        <taxon>Mammalia</taxon>
        <taxon>Eutheria</taxon>
        <taxon>Euarchontoglires</taxon>
        <taxon>Primates</taxon>
        <taxon>Haplorrhini</taxon>
        <taxon>Catarrhini</taxon>
        <taxon>Hominidae</taxon>
        <taxon>Pongo</taxon>
    </lineage>
</organism>